<organism>
    <name type="scientific">Saara hardwickii</name>
    <name type="common">Indian spiny-tailed lizard</name>
    <name type="synonym">Uromastyx hardwickii</name>
    <dbReference type="NCBI Taxonomy" id="40250"/>
    <lineage>
        <taxon>Eukaryota</taxon>
        <taxon>Metazoa</taxon>
        <taxon>Chordata</taxon>
        <taxon>Craniata</taxon>
        <taxon>Vertebrata</taxon>
        <taxon>Euteleostomi</taxon>
        <taxon>Lepidosauria</taxon>
        <taxon>Squamata</taxon>
        <taxon>Bifurcata</taxon>
        <taxon>Unidentata</taxon>
        <taxon>Episquamata</taxon>
        <taxon>Toxicofera</taxon>
        <taxon>Iguania</taxon>
        <taxon>Acrodonta</taxon>
        <taxon>Agamidae</taxon>
        <taxon>Uromastycinae</taxon>
        <taxon>Saara</taxon>
    </lineage>
</organism>
<name>ADH1A_SAAHA</name>
<reference key="1">
    <citation type="journal article" date="1996" name="Eur. J. Biochem.">
        <title>Linking of isozyme and class variability patterns in the emergence of novel alcohol dehydrogenase functions. Characterization of isozymes in Uromastix hardwickii.</title>
        <authorList>
            <person name="Hjelmqvist L."/>
            <person name="Shafqat J."/>
            <person name="Siddiqi A.R."/>
            <person name="Joernvall H."/>
        </authorList>
    </citation>
    <scope>PROTEIN SEQUENCE</scope>
    <scope>ACETYLATION AT GLY-1</scope>
</reference>
<reference key="2">
    <citation type="journal article" date="1992" name="FEBS Lett.">
        <title>Reptilian alcohol dehydrogenase. Heterogeneity relevant to class multiplicity of the mammalian enzyme.</title>
        <authorList>
            <person name="Hjelmqvist L."/>
            <person name="Ericsson M."/>
            <person name="Shafqat J."/>
            <person name="Carlquist M."/>
            <person name="Siddiqi A.R."/>
            <person name="Hoeoeg J.-O."/>
            <person name="Joernvall H."/>
        </authorList>
    </citation>
    <scope>PROTEIN SEQUENCE OF 1-18</scope>
    <source>
        <tissue>Liver</tissue>
    </source>
</reference>
<feature type="chain" id="PRO_0000160677" description="Alcohol dehydrogenase 1A">
    <location>
        <begin position="1"/>
        <end position="375"/>
    </location>
</feature>
<feature type="binding site" evidence="1">
    <location>
        <position position="46"/>
    </location>
    <ligand>
        <name>Zn(2+)</name>
        <dbReference type="ChEBI" id="CHEBI:29105"/>
        <label>1</label>
        <note>catalytic</note>
    </ligand>
</feature>
<feature type="binding site" evidence="1">
    <location>
        <position position="67"/>
    </location>
    <ligand>
        <name>Zn(2+)</name>
        <dbReference type="ChEBI" id="CHEBI:29105"/>
        <label>1</label>
        <note>catalytic</note>
    </ligand>
</feature>
<feature type="binding site" evidence="1">
    <location>
        <position position="97"/>
    </location>
    <ligand>
        <name>Zn(2+)</name>
        <dbReference type="ChEBI" id="CHEBI:29105"/>
        <label>2</label>
    </ligand>
</feature>
<feature type="binding site" evidence="1">
    <location>
        <position position="100"/>
    </location>
    <ligand>
        <name>Zn(2+)</name>
        <dbReference type="ChEBI" id="CHEBI:29105"/>
        <label>2</label>
    </ligand>
</feature>
<feature type="binding site" evidence="1">
    <location>
        <position position="103"/>
    </location>
    <ligand>
        <name>Zn(2+)</name>
        <dbReference type="ChEBI" id="CHEBI:29105"/>
        <label>2</label>
    </ligand>
</feature>
<feature type="binding site" evidence="1">
    <location>
        <position position="111"/>
    </location>
    <ligand>
        <name>Zn(2+)</name>
        <dbReference type="ChEBI" id="CHEBI:29105"/>
        <label>2</label>
    </ligand>
</feature>
<feature type="binding site" evidence="1">
    <location>
        <position position="174"/>
    </location>
    <ligand>
        <name>Zn(2+)</name>
        <dbReference type="ChEBI" id="CHEBI:29105"/>
        <label>1</label>
        <note>catalytic</note>
    </ligand>
</feature>
<feature type="binding site" evidence="1">
    <location>
        <begin position="199"/>
        <end position="204"/>
    </location>
    <ligand>
        <name>NAD(+)</name>
        <dbReference type="ChEBI" id="CHEBI:57540"/>
    </ligand>
</feature>
<feature type="binding site" evidence="1">
    <location>
        <position position="223"/>
    </location>
    <ligand>
        <name>NAD(+)</name>
        <dbReference type="ChEBI" id="CHEBI:57540"/>
    </ligand>
</feature>
<feature type="binding site" evidence="1">
    <location>
        <position position="228"/>
    </location>
    <ligand>
        <name>NAD(+)</name>
        <dbReference type="ChEBI" id="CHEBI:57540"/>
    </ligand>
</feature>
<feature type="binding site" evidence="1">
    <location>
        <begin position="293"/>
        <end position="295"/>
    </location>
    <ligand>
        <name>NAD(+)</name>
        <dbReference type="ChEBI" id="CHEBI:57540"/>
    </ligand>
</feature>
<feature type="binding site" evidence="1">
    <location>
        <position position="370"/>
    </location>
    <ligand>
        <name>NAD(+)</name>
        <dbReference type="ChEBI" id="CHEBI:57540"/>
    </ligand>
</feature>
<feature type="modified residue" description="N-acetylglycine" evidence="2">
    <location>
        <position position="1"/>
    </location>
</feature>
<protein>
    <recommendedName>
        <fullName>Alcohol dehydrogenase 1A</fullName>
        <ecNumber>1.1.1.1</ecNumber>
    </recommendedName>
    <alternativeName>
        <fullName>Alcohol dehydrogenase I-A</fullName>
        <shortName>ADH IA</shortName>
    </alternativeName>
</protein>
<dbReference type="EC" id="1.1.1.1"/>
<dbReference type="PIR" id="S62638">
    <property type="entry name" value="S62638"/>
</dbReference>
<dbReference type="SMR" id="P25405"/>
<dbReference type="iPTMnet" id="P25405"/>
<dbReference type="GO" id="GO:0005829">
    <property type="term" value="C:cytosol"/>
    <property type="evidence" value="ECO:0007669"/>
    <property type="project" value="TreeGrafter"/>
</dbReference>
<dbReference type="GO" id="GO:0004745">
    <property type="term" value="F:all-trans-retinol dehydrogenase (NAD+) activity"/>
    <property type="evidence" value="ECO:0007669"/>
    <property type="project" value="TreeGrafter"/>
</dbReference>
<dbReference type="GO" id="GO:0008270">
    <property type="term" value="F:zinc ion binding"/>
    <property type="evidence" value="ECO:0007669"/>
    <property type="project" value="InterPro"/>
</dbReference>
<dbReference type="GO" id="GO:0042573">
    <property type="term" value="P:retinoic acid metabolic process"/>
    <property type="evidence" value="ECO:0007669"/>
    <property type="project" value="TreeGrafter"/>
</dbReference>
<dbReference type="GO" id="GO:0042572">
    <property type="term" value="P:retinol metabolic process"/>
    <property type="evidence" value="ECO:0007669"/>
    <property type="project" value="TreeGrafter"/>
</dbReference>
<dbReference type="CDD" id="cd08299">
    <property type="entry name" value="alcohol_DH_class_I_II_IV"/>
    <property type="match status" value="1"/>
</dbReference>
<dbReference type="FunFam" id="3.40.50.720:FF:000003">
    <property type="entry name" value="S-(hydroxymethyl)glutathione dehydrogenase"/>
    <property type="match status" value="1"/>
</dbReference>
<dbReference type="FunFam" id="3.90.180.10:FF:000001">
    <property type="entry name" value="S-(hydroxymethyl)glutathione dehydrogenase"/>
    <property type="match status" value="1"/>
</dbReference>
<dbReference type="Gene3D" id="3.90.180.10">
    <property type="entry name" value="Medium-chain alcohol dehydrogenases, catalytic domain"/>
    <property type="match status" value="1"/>
</dbReference>
<dbReference type="Gene3D" id="3.40.50.720">
    <property type="entry name" value="NAD(P)-binding Rossmann-like Domain"/>
    <property type="match status" value="1"/>
</dbReference>
<dbReference type="InterPro" id="IPR013149">
    <property type="entry name" value="ADH-like_C"/>
</dbReference>
<dbReference type="InterPro" id="IPR013154">
    <property type="entry name" value="ADH-like_N"/>
</dbReference>
<dbReference type="InterPro" id="IPR002328">
    <property type="entry name" value="ADH_Zn_CS"/>
</dbReference>
<dbReference type="InterPro" id="IPR011032">
    <property type="entry name" value="GroES-like_sf"/>
</dbReference>
<dbReference type="InterPro" id="IPR036291">
    <property type="entry name" value="NAD(P)-bd_dom_sf"/>
</dbReference>
<dbReference type="InterPro" id="IPR020843">
    <property type="entry name" value="PKS_ER"/>
</dbReference>
<dbReference type="PANTHER" id="PTHR43880">
    <property type="entry name" value="ALCOHOL DEHYDROGENASE"/>
    <property type="match status" value="1"/>
</dbReference>
<dbReference type="PANTHER" id="PTHR43880:SF1">
    <property type="entry name" value="ALCOHOL DEHYDROGENASE 1A"/>
    <property type="match status" value="1"/>
</dbReference>
<dbReference type="Pfam" id="PF08240">
    <property type="entry name" value="ADH_N"/>
    <property type="match status" value="1"/>
</dbReference>
<dbReference type="Pfam" id="PF00107">
    <property type="entry name" value="ADH_zinc_N"/>
    <property type="match status" value="1"/>
</dbReference>
<dbReference type="SMART" id="SM00829">
    <property type="entry name" value="PKS_ER"/>
    <property type="match status" value="1"/>
</dbReference>
<dbReference type="SUPFAM" id="SSF50129">
    <property type="entry name" value="GroES-like"/>
    <property type="match status" value="2"/>
</dbReference>
<dbReference type="SUPFAM" id="SSF51735">
    <property type="entry name" value="NAD(P)-binding Rossmann-fold domains"/>
    <property type="match status" value="1"/>
</dbReference>
<dbReference type="PROSITE" id="PS00059">
    <property type="entry name" value="ADH_ZINC"/>
    <property type="match status" value="1"/>
</dbReference>
<evidence type="ECO:0000250" key="1"/>
<evidence type="ECO:0000269" key="2">
    <source>
    </source>
</evidence>
<evidence type="ECO:0000305" key="3"/>
<proteinExistence type="evidence at protein level"/>
<keyword id="KW-0007">Acetylation</keyword>
<keyword id="KW-0963">Cytoplasm</keyword>
<keyword id="KW-0903">Direct protein sequencing</keyword>
<keyword id="KW-0479">Metal-binding</keyword>
<keyword id="KW-0520">NAD</keyword>
<keyword id="KW-0560">Oxidoreductase</keyword>
<keyword id="KW-0862">Zinc</keyword>
<accession>P25405</accession>
<comment type="catalytic activity">
    <reaction>
        <text>a primary alcohol + NAD(+) = an aldehyde + NADH + H(+)</text>
        <dbReference type="Rhea" id="RHEA:10736"/>
        <dbReference type="ChEBI" id="CHEBI:15378"/>
        <dbReference type="ChEBI" id="CHEBI:15734"/>
        <dbReference type="ChEBI" id="CHEBI:17478"/>
        <dbReference type="ChEBI" id="CHEBI:57540"/>
        <dbReference type="ChEBI" id="CHEBI:57945"/>
        <dbReference type="EC" id="1.1.1.1"/>
    </reaction>
</comment>
<comment type="catalytic activity">
    <reaction>
        <text>a secondary alcohol + NAD(+) = a ketone + NADH + H(+)</text>
        <dbReference type="Rhea" id="RHEA:10740"/>
        <dbReference type="ChEBI" id="CHEBI:15378"/>
        <dbReference type="ChEBI" id="CHEBI:17087"/>
        <dbReference type="ChEBI" id="CHEBI:35681"/>
        <dbReference type="ChEBI" id="CHEBI:57540"/>
        <dbReference type="ChEBI" id="CHEBI:57945"/>
        <dbReference type="EC" id="1.1.1.1"/>
    </reaction>
</comment>
<comment type="cofactor">
    <cofactor evidence="1">
        <name>Zn(2+)</name>
        <dbReference type="ChEBI" id="CHEBI:29105"/>
    </cofactor>
    <text evidence="1">Binds 2 Zn(2+) ions per subunit.</text>
</comment>
<comment type="subunit">
    <text>Multimeric (with different ratios of monomers).</text>
</comment>
<comment type="subcellular location">
    <subcellularLocation>
        <location>Cytoplasm</location>
    </subcellularLocation>
</comment>
<comment type="miscellaneous">
    <text>In U.hardwickii there are two isozymes of alcohol dehydrogenase I.</text>
</comment>
<comment type="similarity">
    <text evidence="3">Belongs to the zinc-containing alcohol dehydrogenase family. Class-I subfamily.</text>
</comment>
<sequence>GTAGKVIKCKAAIAWEIKKPLSIEQIEVAPPKAHEVRIKILATGICRSDDHVISGAFKMPLPMVLGHEAAGVVESVGEGVTCVKPGDKVIPLFVPQCGKCSSCRSTRGNLCTSNDLSAATGLMPDGTSRFTCKGKSLHHFISTSSFTEYTVVHENSVVKIDAAAPLEKVCLIGCGFSTGYGAAVETAKVEPGSTCAVFGLGGVGLSAVMGCKAAGASRIIGVDINKDKFPKAKEMGATECVNPLDYKKPINEVLFDLTGGEGVDYSFEVIGRTDTMTAALASCHMDYGTSIIVGLPPSASEITFSPGLIFTGRTWKGSVFGGWKSKDSVPRLVSDFMQKKFSLDPLITHTMPFDKINEGFELLRAGKSIRSVLLF</sequence>